<protein>
    <recommendedName>
        <fullName evidence="1">1-(5-phosphoribosyl)-5-[(5-phosphoribosylamino)methylideneamino] imidazole-4-carboxamide isomerase</fullName>
        <ecNumber evidence="1">5.3.1.16</ecNumber>
    </recommendedName>
    <alternativeName>
        <fullName evidence="1">Phosphoribosylformimino-5-aminoimidazole carboxamide ribotide isomerase</fullName>
    </alternativeName>
</protein>
<proteinExistence type="inferred from homology"/>
<dbReference type="EC" id="5.3.1.16" evidence="1"/>
<dbReference type="EMBL" id="CP001037">
    <property type="protein sequence ID" value="ACC78853.1"/>
    <property type="molecule type" value="Genomic_DNA"/>
</dbReference>
<dbReference type="RefSeq" id="WP_012406882.1">
    <property type="nucleotide sequence ID" value="NC_010628.1"/>
</dbReference>
<dbReference type="SMR" id="B2J2G1"/>
<dbReference type="STRING" id="63737.Npun_R0051"/>
<dbReference type="EnsemblBacteria" id="ACC78853">
    <property type="protein sequence ID" value="ACC78853"/>
    <property type="gene ID" value="Npun_R0051"/>
</dbReference>
<dbReference type="KEGG" id="npu:Npun_R0051"/>
<dbReference type="eggNOG" id="COG0106">
    <property type="taxonomic scope" value="Bacteria"/>
</dbReference>
<dbReference type="HOGENOM" id="CLU_048577_1_1_3"/>
<dbReference type="OrthoDB" id="9807749at2"/>
<dbReference type="PhylomeDB" id="B2J2G1"/>
<dbReference type="UniPathway" id="UPA00031">
    <property type="reaction ID" value="UER00009"/>
</dbReference>
<dbReference type="Proteomes" id="UP000001191">
    <property type="component" value="Chromosome"/>
</dbReference>
<dbReference type="GO" id="GO:0005737">
    <property type="term" value="C:cytoplasm"/>
    <property type="evidence" value="ECO:0007669"/>
    <property type="project" value="UniProtKB-SubCell"/>
</dbReference>
<dbReference type="GO" id="GO:0003949">
    <property type="term" value="F:1-(5-phosphoribosyl)-5-[(5-phosphoribosylamino)methylideneamino]imidazole-4-carboxamide isomerase activity"/>
    <property type="evidence" value="ECO:0007669"/>
    <property type="project" value="UniProtKB-UniRule"/>
</dbReference>
<dbReference type="GO" id="GO:0000105">
    <property type="term" value="P:L-histidine biosynthetic process"/>
    <property type="evidence" value="ECO:0007669"/>
    <property type="project" value="UniProtKB-UniRule"/>
</dbReference>
<dbReference type="GO" id="GO:0000162">
    <property type="term" value="P:L-tryptophan biosynthetic process"/>
    <property type="evidence" value="ECO:0007669"/>
    <property type="project" value="TreeGrafter"/>
</dbReference>
<dbReference type="CDD" id="cd04732">
    <property type="entry name" value="HisA"/>
    <property type="match status" value="1"/>
</dbReference>
<dbReference type="FunFam" id="3.20.20.70:FF:000009">
    <property type="entry name" value="1-(5-phosphoribosyl)-5-[(5-phosphoribosylamino)methylideneamino] imidazole-4-carboxamide isomerase"/>
    <property type="match status" value="1"/>
</dbReference>
<dbReference type="Gene3D" id="3.20.20.70">
    <property type="entry name" value="Aldolase class I"/>
    <property type="match status" value="1"/>
</dbReference>
<dbReference type="HAMAP" id="MF_01014">
    <property type="entry name" value="HisA"/>
    <property type="match status" value="1"/>
</dbReference>
<dbReference type="InterPro" id="IPR013785">
    <property type="entry name" value="Aldolase_TIM"/>
</dbReference>
<dbReference type="InterPro" id="IPR006062">
    <property type="entry name" value="His_biosynth"/>
</dbReference>
<dbReference type="InterPro" id="IPR006063">
    <property type="entry name" value="HisA_bact_arch"/>
</dbReference>
<dbReference type="InterPro" id="IPR044524">
    <property type="entry name" value="Isoase_HisA-like"/>
</dbReference>
<dbReference type="InterPro" id="IPR023016">
    <property type="entry name" value="Isoase_HisA-like_bact"/>
</dbReference>
<dbReference type="InterPro" id="IPR011060">
    <property type="entry name" value="RibuloseP-bd_barrel"/>
</dbReference>
<dbReference type="NCBIfam" id="TIGR00007">
    <property type="entry name" value="1-(5-phosphoribosyl)-5-[(5-phosphoribosylamino)methylideneamino]imidazole-4-carboxamide isomerase"/>
    <property type="match status" value="1"/>
</dbReference>
<dbReference type="NCBIfam" id="NF010112">
    <property type="entry name" value="PRK13585.1"/>
    <property type="match status" value="1"/>
</dbReference>
<dbReference type="PANTHER" id="PTHR43090">
    <property type="entry name" value="1-(5-PHOSPHORIBOSYL)-5-[(5-PHOSPHORIBOSYLAMINO)METHYLIDENEAMINO] IMIDAZOLE-4-CARBOXAMIDE ISOMERASE"/>
    <property type="match status" value="1"/>
</dbReference>
<dbReference type="PANTHER" id="PTHR43090:SF2">
    <property type="entry name" value="1-(5-PHOSPHORIBOSYL)-5-[(5-PHOSPHORIBOSYLAMINO)METHYLIDENEAMINO] IMIDAZOLE-4-CARBOXAMIDE ISOMERASE"/>
    <property type="match status" value="1"/>
</dbReference>
<dbReference type="Pfam" id="PF00977">
    <property type="entry name" value="His_biosynth"/>
    <property type="match status" value="1"/>
</dbReference>
<dbReference type="SUPFAM" id="SSF51366">
    <property type="entry name" value="Ribulose-phoshate binding barrel"/>
    <property type="match status" value="1"/>
</dbReference>
<sequence length="257" mass="27326">MDVIPAIDLLEGRCVRLYQGDYDRSQVFSENPVDVAKQWVDQGANRLHIVDLDGAKAGKVVNLGAIEAIAHAVSVPIEIGGGLRDRTSVQQLFNLGIQWAILGTIAVEQPQLVQELCAEFPGQIIIGIDARNGRVATRGWLETSEVLATQLAVQMQELGAAAIIYTDIHRDGTLIGPNLEALRELAAVISIPIIASGGVSSLTDLLSLLALEPQGVTGVIVGRALYTGDILLKEALRAIGPGRIQDIPPNLGFSSFA</sequence>
<feature type="chain" id="PRO_1000135134" description="1-(5-phosphoribosyl)-5-[(5-phosphoribosylamino)methylideneamino] imidazole-4-carboxamide isomerase">
    <location>
        <begin position="1"/>
        <end position="257"/>
    </location>
</feature>
<feature type="active site" description="Proton acceptor" evidence="1">
    <location>
        <position position="8"/>
    </location>
</feature>
<feature type="active site" description="Proton donor" evidence="1">
    <location>
        <position position="129"/>
    </location>
</feature>
<gene>
    <name evidence="1" type="primary">hisA</name>
    <name type="ordered locus">Npun_R0051</name>
</gene>
<comment type="catalytic activity">
    <reaction evidence="1">
        <text>1-(5-phospho-beta-D-ribosyl)-5-[(5-phospho-beta-D-ribosylamino)methylideneamino]imidazole-4-carboxamide = 5-[(5-phospho-1-deoxy-D-ribulos-1-ylimino)methylamino]-1-(5-phospho-beta-D-ribosyl)imidazole-4-carboxamide</text>
        <dbReference type="Rhea" id="RHEA:15469"/>
        <dbReference type="ChEBI" id="CHEBI:58435"/>
        <dbReference type="ChEBI" id="CHEBI:58525"/>
        <dbReference type="EC" id="5.3.1.16"/>
    </reaction>
</comment>
<comment type="pathway">
    <text evidence="1">Amino-acid biosynthesis; L-histidine biosynthesis; L-histidine from 5-phospho-alpha-D-ribose 1-diphosphate: step 4/9.</text>
</comment>
<comment type="subcellular location">
    <subcellularLocation>
        <location evidence="1">Cytoplasm</location>
    </subcellularLocation>
</comment>
<comment type="similarity">
    <text evidence="1">Belongs to the HisA/HisF family.</text>
</comment>
<evidence type="ECO:0000255" key="1">
    <source>
        <dbReference type="HAMAP-Rule" id="MF_01014"/>
    </source>
</evidence>
<keyword id="KW-0028">Amino-acid biosynthesis</keyword>
<keyword id="KW-0963">Cytoplasm</keyword>
<keyword id="KW-0368">Histidine biosynthesis</keyword>
<keyword id="KW-0413">Isomerase</keyword>
<keyword id="KW-1185">Reference proteome</keyword>
<name>HIS4_NOSP7</name>
<organism>
    <name type="scientific">Nostoc punctiforme (strain ATCC 29133 / PCC 73102)</name>
    <dbReference type="NCBI Taxonomy" id="63737"/>
    <lineage>
        <taxon>Bacteria</taxon>
        <taxon>Bacillati</taxon>
        <taxon>Cyanobacteriota</taxon>
        <taxon>Cyanophyceae</taxon>
        <taxon>Nostocales</taxon>
        <taxon>Nostocaceae</taxon>
        <taxon>Nostoc</taxon>
    </lineage>
</organism>
<accession>B2J2G1</accession>
<reference key="1">
    <citation type="journal article" date="2013" name="Plant Physiol.">
        <title>A Nostoc punctiforme Sugar Transporter Necessary to Establish a Cyanobacterium-Plant Symbiosis.</title>
        <authorList>
            <person name="Ekman M."/>
            <person name="Picossi S."/>
            <person name="Campbell E.L."/>
            <person name="Meeks J.C."/>
            <person name="Flores E."/>
        </authorList>
    </citation>
    <scope>NUCLEOTIDE SEQUENCE [LARGE SCALE GENOMIC DNA]</scope>
    <source>
        <strain>ATCC 29133 / PCC 73102</strain>
    </source>
</reference>